<sequence length="328" mass="35040">MTPELLTTLLITGGGLIALAVFFTFVPVGLWISSFAAGVHVSIFTLIGMRLRRVIPSKIVNPLIKAVKAGIELNTNQLESHFLAGGNVDRVVNALIAAHRANIELSFERAAAIDLAGRNVLEAVQMSVNPKVIETPFIAGVAMDGIEVKAKARITVRANIDRLVGGAGEETIIARVGEGVVSTIGSQNNHKHVLENPDMISRTVLTKGLDSGTAFEILSIDIADIDIGKNIGAVLQTDQAEADKKIAQAKAEERRAMAIAREQEMKSSVEEMRAKVVGAEAEVPLAMAEALRNGKLGVMDYVNYLNVQADTEMRKAIGAPVDSESDNE</sequence>
<name>FLOA_EXISA</name>
<proteinExistence type="inferred from homology"/>
<accession>C4L412</accession>
<dbReference type="EMBL" id="CP001615">
    <property type="protein sequence ID" value="ACQ69534.1"/>
    <property type="molecule type" value="Genomic_DNA"/>
</dbReference>
<dbReference type="RefSeq" id="WP_012726653.1">
    <property type="nucleotide sequence ID" value="NC_012673.1"/>
</dbReference>
<dbReference type="SMR" id="C4L412"/>
<dbReference type="STRING" id="360911.EAT1b_0602"/>
<dbReference type="GeneID" id="94371783"/>
<dbReference type="KEGG" id="eat:EAT1b_0602"/>
<dbReference type="eggNOG" id="COG4864">
    <property type="taxonomic scope" value="Bacteria"/>
</dbReference>
<dbReference type="HOGENOM" id="CLU_836378_0_0_9"/>
<dbReference type="OrthoDB" id="9808365at2"/>
<dbReference type="Proteomes" id="UP000000716">
    <property type="component" value="Chromosome"/>
</dbReference>
<dbReference type="GO" id="GO:0045121">
    <property type="term" value="C:membrane raft"/>
    <property type="evidence" value="ECO:0007669"/>
    <property type="project" value="UniProtKB-SubCell"/>
</dbReference>
<dbReference type="GO" id="GO:0005886">
    <property type="term" value="C:plasma membrane"/>
    <property type="evidence" value="ECO:0007669"/>
    <property type="project" value="UniProtKB-SubCell"/>
</dbReference>
<dbReference type="HAMAP" id="MF_01562">
    <property type="entry name" value="FloA"/>
    <property type="match status" value="1"/>
</dbReference>
<dbReference type="InterPro" id="IPR022853">
    <property type="entry name" value="FloA"/>
</dbReference>
<dbReference type="NCBIfam" id="NF010186">
    <property type="entry name" value="PRK13665.1"/>
    <property type="match status" value="1"/>
</dbReference>
<dbReference type="Pfam" id="PF12127">
    <property type="entry name" value="FloA"/>
    <property type="match status" value="1"/>
</dbReference>
<comment type="function">
    <text evidence="1">Found in functional membrane microdomains (FMM) that may be equivalent to eukaryotic membrane rafts. FMMs are highly dynamic and increase in number as cells age. Flotillins are thought to be important factors in membrane fluidity.</text>
</comment>
<comment type="subunit">
    <text evidence="1">Homooligomerizes.</text>
</comment>
<comment type="subcellular location">
    <subcellularLocation>
        <location evidence="1">Cell membrane</location>
        <topology evidence="1">Multi-pass membrane protein</topology>
    </subcellularLocation>
    <subcellularLocation>
        <location evidence="1">Membrane raft</location>
        <topology evidence="1">Multi-pass membrane protein</topology>
    </subcellularLocation>
</comment>
<comment type="similarity">
    <text evidence="1">Belongs to the flotillin-like FloA family.</text>
</comment>
<gene>
    <name evidence="1" type="primary">floA</name>
    <name type="ordered locus">EAT1b_0602</name>
</gene>
<protein>
    <recommendedName>
        <fullName evidence="1">Flotillin-like protein FloA</fullName>
    </recommendedName>
</protein>
<feature type="chain" id="PRO_1000215511" description="Flotillin-like protein FloA">
    <location>
        <begin position="1"/>
        <end position="328"/>
    </location>
</feature>
<feature type="transmembrane region" description="Helical" evidence="1">
    <location>
        <begin position="9"/>
        <end position="29"/>
    </location>
</feature>
<feature type="transmembrane region" description="Helical" evidence="1">
    <location>
        <begin position="30"/>
        <end position="50"/>
    </location>
</feature>
<keyword id="KW-1003">Cell membrane</keyword>
<keyword id="KW-0472">Membrane</keyword>
<keyword id="KW-0812">Transmembrane</keyword>
<keyword id="KW-1133">Transmembrane helix</keyword>
<evidence type="ECO:0000255" key="1">
    <source>
        <dbReference type="HAMAP-Rule" id="MF_01562"/>
    </source>
</evidence>
<organism>
    <name type="scientific">Exiguobacterium sp. (strain ATCC BAA-1283 / AT1b)</name>
    <dbReference type="NCBI Taxonomy" id="360911"/>
    <lineage>
        <taxon>Bacteria</taxon>
        <taxon>Bacillati</taxon>
        <taxon>Bacillota</taxon>
        <taxon>Bacilli</taxon>
        <taxon>Bacillales</taxon>
        <taxon>Bacillales Family XII. Incertae Sedis</taxon>
        <taxon>Exiguobacterium</taxon>
    </lineage>
</organism>
<reference key="1">
    <citation type="journal article" date="2011" name="J. Bacteriol.">
        <title>Complete genome sequence of the Thermophilic Bacterium Exiguobacterium sp. AT1b.</title>
        <authorList>
            <person name="Vishnivetskaya T.A."/>
            <person name="Lucas S."/>
            <person name="Copeland A."/>
            <person name="Lapidus A."/>
            <person name="Glavina del Rio T."/>
            <person name="Dalin E."/>
            <person name="Tice H."/>
            <person name="Bruce D.C."/>
            <person name="Goodwin L.A."/>
            <person name="Pitluck S."/>
            <person name="Saunders E."/>
            <person name="Brettin T."/>
            <person name="Detter C."/>
            <person name="Han C."/>
            <person name="Larimer F."/>
            <person name="Land M.L."/>
            <person name="Hauser L.J."/>
            <person name="Kyrpides N.C."/>
            <person name="Ovchinnikova G."/>
            <person name="Kathariou S."/>
            <person name="Ramaley R.F."/>
            <person name="Rodrigues D.F."/>
            <person name="Hendrix C."/>
            <person name="Richardson P."/>
            <person name="Tiedje J.M."/>
        </authorList>
    </citation>
    <scope>NUCLEOTIDE SEQUENCE [LARGE SCALE GENOMIC DNA]</scope>
    <source>
        <strain>ATCC BAA-1283 / AT1b</strain>
    </source>
</reference>